<sequence>MEAALSRKTAKKKRKTHTTRGYRKREQEVQKLIRATEGRISGPEHDMEALSLQFFHGFEGEMQQENDFAVEDCQESDEDSGGELAEEPTDSPSQTFIHIDLHDPPLAWGQLFKQRHYYDESLLYRPSNTLHFQLHLSDLSELKDSQIRMLNRYQEQSKSKSGKLGSDLIGQLSGQKPASFLMGKHLYRSVCHRRFQSVFFPPMPPSELKGLPSRRCLKLCLKQLRFSLHPQLLEEHRLAQQLEDLFDVYSQQRKQRICRKLREELEIARQVALKLLASAGQDQTAEVKRQLKLTRQLRQRYYAESAAQRNLLQRLLKEWAKLKELRRQQRFQCTRFQLGLRVVHPPDLEASYCAWKESFETDLAEVYREHLELFYTRLRLWTDQKSHSRTATGHSKPPRKPQFDRIMASLRKEYDKTFKDPEEPYVEVFRLHADEATARLSIPGGDQLPKARNYFLKIFLDGQFVGQSRTYRLEPDLQISINECIGVLLERSLPENLNIWLYEKSTLTPKSRRLAQISTPLVLSSKDDAVQEKLSFQALSSTQLAGDVYLYYEYRSTEGWGSALHLDDVQRLPDALRQTLLPQSLPALPQASKELVTPRPPSGRIKKSQLPSLIFAEQQLQFCGLDVLLDNRRFQLLHSRHQQRNLHTKQLRFVPALEQEISEEEPLPDGRGTVQLLEPGTYWNPIDLHKHRGRKFLQLLYEVIASQSARRAKALQTPLPLLLLAEDSDRSSGTGWTALWRAFCSVFQGQRNSLPREPSGWSGHQSAPDLFKSFCVSLHVVRATGVPVRSRHILNLNERRSSAGGDMSTSLFVTQTLMYSNVRPFVTLSYGQRLCRSRTAEGSNPTWNEQLQLQIQSQFGDLRDDLKISLFDELIEQQYSDEASDVYQRVQCNWLGEFRVPINSLLASRTFEGCIELAMPKVLVGYKRPLIDSVTNMPTDQYPEFKEAVHLWFYLSIEPGGGDLAPLHSCALACAEKPELQQYLDERRLELQQLLPQPQRYVEPLVCTAQGKRVCLTRLMDPVPLPPAAVPSGENPLEICIRYVSLLSHLRSYDPCQGFRGVWLDNQSLLDSTWCSVKDLGVLLCNYMLSLGLECWLILGVSCPHGECSFVLFRQPETAELFLVSPATGKRYQLQDVHCPLRRIYCVVGKQNIYFNIQTETRVSMTHFNLQDGACWFPLFRRRVPAPQSGVQKLDYAYKRSYELSQLQKHIERKIMKKISAWRTTRKTIWNRAFQPRLHKILCDMEDLSTFSRGRYDEPIFSEQLEREFPNYRLYGFTLNFAYTNLAAISERIRTSCIHYNHDASVEFCVAVHLHAHANDVLSVWLFLLSMVPLVE</sequence>
<keyword id="KW-0966">Cell projection</keyword>
<keyword id="KW-0970">Cilium biogenesis/degradation</keyword>
<keyword id="KW-0175">Coiled coil</keyword>
<keyword id="KW-0963">Cytoplasm</keyword>
<keyword id="KW-0206">Cytoskeleton</keyword>
<keyword id="KW-1185">Reference proteome</keyword>
<name>C2D2A_DROME</name>
<feature type="chain" id="PRO_0000445803" description="Coiled-coil and C2 domain-containing protein 2A">
    <location>
        <begin position="1"/>
        <end position="1336"/>
    </location>
</feature>
<feature type="domain" description="C2" evidence="3">
    <location>
        <begin position="755"/>
        <end position="915"/>
    </location>
</feature>
<feature type="region of interest" description="Disordered" evidence="4">
    <location>
        <begin position="1"/>
        <end position="29"/>
    </location>
</feature>
<feature type="region of interest" description="Disordered" evidence="4">
    <location>
        <begin position="70"/>
        <end position="97"/>
    </location>
</feature>
<feature type="coiled-coil region" evidence="2">
    <location>
        <begin position="136"/>
        <end position="156"/>
    </location>
</feature>
<feature type="compositionally biased region" description="Basic residues" evidence="4">
    <location>
        <begin position="8"/>
        <end position="23"/>
    </location>
</feature>
<feature type="compositionally biased region" description="Acidic residues" evidence="4">
    <location>
        <begin position="70"/>
        <end position="89"/>
    </location>
</feature>
<feature type="sequence conflict" description="In Ref. 3; AAM51076." evidence="7" ref="3">
    <original>Q</original>
    <variation>R</variation>
    <location>
        <position position="997"/>
    </location>
</feature>
<feature type="sequence conflict" description="In Ref. 3; AAM51076." evidence="7" ref="3">
    <original>Q</original>
    <variation>H</variation>
    <location>
        <position position="1158"/>
    </location>
</feature>
<feature type="sequence conflict" description="In Ref. 3; AAM51076." evidence="7" ref="3">
    <original>RRRVP</original>
    <variation>SRRVT</variation>
    <location>
        <begin position="1181"/>
        <end position="1185"/>
    </location>
</feature>
<evidence type="ECO:0000250" key="1">
    <source>
        <dbReference type="UniProtKB" id="Q8CFW7"/>
    </source>
</evidence>
<evidence type="ECO:0000255" key="2"/>
<evidence type="ECO:0000255" key="3">
    <source>
        <dbReference type="PROSITE-ProRule" id="PRU00041"/>
    </source>
</evidence>
<evidence type="ECO:0000256" key="4">
    <source>
        <dbReference type="SAM" id="MobiDB-lite"/>
    </source>
</evidence>
<evidence type="ECO:0000269" key="5">
    <source>
    </source>
</evidence>
<evidence type="ECO:0000269" key="6">
    <source>
    </source>
</evidence>
<evidence type="ECO:0000305" key="7"/>
<evidence type="ECO:0000305" key="8">
    <source>
    </source>
</evidence>
<evidence type="ECO:0000305" key="9">
    <source>
    </source>
</evidence>
<evidence type="ECO:0000312" key="10">
    <source>
        <dbReference type="EMBL" id="AAM51076.1"/>
    </source>
</evidence>
<evidence type="ECO:0000312" key="11">
    <source>
        <dbReference type="EMBL" id="ADI46810.1"/>
    </source>
</evidence>
<evidence type="ECO:0000312" key="12">
    <source>
        <dbReference type="FlyBase" id="FBgn0263113"/>
    </source>
</evidence>
<evidence type="ECO:0000312" key="13">
    <source>
        <dbReference type="Proteomes" id="UP000000803"/>
    </source>
</evidence>
<reference evidence="13" key="1">
    <citation type="journal article" date="2000" name="Science">
        <title>The genome sequence of Drosophila melanogaster.</title>
        <authorList>
            <person name="Adams M.D."/>
            <person name="Celniker S.E."/>
            <person name="Holt R.A."/>
            <person name="Evans C.A."/>
            <person name="Gocayne J.D."/>
            <person name="Amanatides P.G."/>
            <person name="Scherer S.E."/>
            <person name="Li P.W."/>
            <person name="Hoskins R.A."/>
            <person name="Galle R.F."/>
            <person name="George R.A."/>
            <person name="Lewis S.E."/>
            <person name="Richards S."/>
            <person name="Ashburner M."/>
            <person name="Henderson S.N."/>
            <person name="Sutton G.G."/>
            <person name="Wortman J.R."/>
            <person name="Yandell M.D."/>
            <person name="Zhang Q."/>
            <person name="Chen L.X."/>
            <person name="Brandon R.C."/>
            <person name="Rogers Y.-H.C."/>
            <person name="Blazej R.G."/>
            <person name="Champe M."/>
            <person name="Pfeiffer B.D."/>
            <person name="Wan K.H."/>
            <person name="Doyle C."/>
            <person name="Baxter E.G."/>
            <person name="Helt G."/>
            <person name="Nelson C.R."/>
            <person name="Miklos G.L.G."/>
            <person name="Abril J.F."/>
            <person name="Agbayani A."/>
            <person name="An H.-J."/>
            <person name="Andrews-Pfannkoch C."/>
            <person name="Baldwin D."/>
            <person name="Ballew R.M."/>
            <person name="Basu A."/>
            <person name="Baxendale J."/>
            <person name="Bayraktaroglu L."/>
            <person name="Beasley E.M."/>
            <person name="Beeson K.Y."/>
            <person name="Benos P.V."/>
            <person name="Berman B.P."/>
            <person name="Bhandari D."/>
            <person name="Bolshakov S."/>
            <person name="Borkova D."/>
            <person name="Botchan M.R."/>
            <person name="Bouck J."/>
            <person name="Brokstein P."/>
            <person name="Brottier P."/>
            <person name="Burtis K.C."/>
            <person name="Busam D.A."/>
            <person name="Butler H."/>
            <person name="Cadieu E."/>
            <person name="Center A."/>
            <person name="Chandra I."/>
            <person name="Cherry J.M."/>
            <person name="Cawley S."/>
            <person name="Dahlke C."/>
            <person name="Davenport L.B."/>
            <person name="Davies P."/>
            <person name="de Pablos B."/>
            <person name="Delcher A."/>
            <person name="Deng Z."/>
            <person name="Mays A.D."/>
            <person name="Dew I."/>
            <person name="Dietz S.M."/>
            <person name="Dodson K."/>
            <person name="Doup L.E."/>
            <person name="Downes M."/>
            <person name="Dugan-Rocha S."/>
            <person name="Dunkov B.C."/>
            <person name="Dunn P."/>
            <person name="Durbin K.J."/>
            <person name="Evangelista C.C."/>
            <person name="Ferraz C."/>
            <person name="Ferriera S."/>
            <person name="Fleischmann W."/>
            <person name="Fosler C."/>
            <person name="Gabrielian A.E."/>
            <person name="Garg N.S."/>
            <person name="Gelbart W.M."/>
            <person name="Glasser K."/>
            <person name="Glodek A."/>
            <person name="Gong F."/>
            <person name="Gorrell J.H."/>
            <person name="Gu Z."/>
            <person name="Guan P."/>
            <person name="Harris M."/>
            <person name="Harris N.L."/>
            <person name="Harvey D.A."/>
            <person name="Heiman T.J."/>
            <person name="Hernandez J.R."/>
            <person name="Houck J."/>
            <person name="Hostin D."/>
            <person name="Houston K.A."/>
            <person name="Howland T.J."/>
            <person name="Wei M.-H."/>
            <person name="Ibegwam C."/>
            <person name="Jalali M."/>
            <person name="Kalush F."/>
            <person name="Karpen G.H."/>
            <person name="Ke Z."/>
            <person name="Kennison J.A."/>
            <person name="Ketchum K.A."/>
            <person name="Kimmel B.E."/>
            <person name="Kodira C.D."/>
            <person name="Kraft C.L."/>
            <person name="Kravitz S."/>
            <person name="Kulp D."/>
            <person name="Lai Z."/>
            <person name="Lasko P."/>
            <person name="Lei Y."/>
            <person name="Levitsky A.A."/>
            <person name="Li J.H."/>
            <person name="Li Z."/>
            <person name="Liang Y."/>
            <person name="Lin X."/>
            <person name="Liu X."/>
            <person name="Mattei B."/>
            <person name="McIntosh T.C."/>
            <person name="McLeod M.P."/>
            <person name="McPherson D."/>
            <person name="Merkulov G."/>
            <person name="Milshina N.V."/>
            <person name="Mobarry C."/>
            <person name="Morris J."/>
            <person name="Moshrefi A."/>
            <person name="Mount S.M."/>
            <person name="Moy M."/>
            <person name="Murphy B."/>
            <person name="Murphy L."/>
            <person name="Muzny D.M."/>
            <person name="Nelson D.L."/>
            <person name="Nelson D.R."/>
            <person name="Nelson K.A."/>
            <person name="Nixon K."/>
            <person name="Nusskern D.R."/>
            <person name="Pacleb J.M."/>
            <person name="Palazzolo M."/>
            <person name="Pittman G.S."/>
            <person name="Pan S."/>
            <person name="Pollard J."/>
            <person name="Puri V."/>
            <person name="Reese M.G."/>
            <person name="Reinert K."/>
            <person name="Remington K."/>
            <person name="Saunders R.D.C."/>
            <person name="Scheeler F."/>
            <person name="Shen H."/>
            <person name="Shue B.C."/>
            <person name="Siden-Kiamos I."/>
            <person name="Simpson M."/>
            <person name="Skupski M.P."/>
            <person name="Smith T.J."/>
            <person name="Spier E."/>
            <person name="Spradling A.C."/>
            <person name="Stapleton M."/>
            <person name="Strong R."/>
            <person name="Sun E."/>
            <person name="Svirskas R."/>
            <person name="Tector C."/>
            <person name="Turner R."/>
            <person name="Venter E."/>
            <person name="Wang A.H."/>
            <person name="Wang X."/>
            <person name="Wang Z.-Y."/>
            <person name="Wassarman D.A."/>
            <person name="Weinstock G.M."/>
            <person name="Weissenbach J."/>
            <person name="Williams S.M."/>
            <person name="Woodage T."/>
            <person name="Worley K.C."/>
            <person name="Wu D."/>
            <person name="Yang S."/>
            <person name="Yao Q.A."/>
            <person name="Ye J."/>
            <person name="Yeh R.-F."/>
            <person name="Zaveri J.S."/>
            <person name="Zhan M."/>
            <person name="Zhang G."/>
            <person name="Zhao Q."/>
            <person name="Zheng L."/>
            <person name="Zheng X.H."/>
            <person name="Zhong F.N."/>
            <person name="Zhong W."/>
            <person name="Zhou X."/>
            <person name="Zhu S.C."/>
            <person name="Zhu X."/>
            <person name="Smith H.O."/>
            <person name="Gibbs R.A."/>
            <person name="Myers E.W."/>
            <person name="Rubin G.M."/>
            <person name="Venter J.C."/>
        </authorList>
    </citation>
    <scope>NUCLEOTIDE SEQUENCE [LARGE SCALE GENOMIC DNA]</scope>
    <source>
        <strain evidence="13">Berkeley</strain>
    </source>
</reference>
<reference evidence="13" key="2">
    <citation type="journal article" date="2002" name="Genome Biol.">
        <title>Annotation of the Drosophila melanogaster euchromatic genome: a systematic review.</title>
        <authorList>
            <person name="Misra S."/>
            <person name="Crosby M.A."/>
            <person name="Mungall C.J."/>
            <person name="Matthews B.B."/>
            <person name="Campbell K.S."/>
            <person name="Hradecky P."/>
            <person name="Huang Y."/>
            <person name="Kaminker J.S."/>
            <person name="Millburn G.H."/>
            <person name="Prochnik S.E."/>
            <person name="Smith C.D."/>
            <person name="Tupy J.L."/>
            <person name="Whitfield E.J."/>
            <person name="Bayraktaroglu L."/>
            <person name="Berman B.P."/>
            <person name="Bettencourt B.R."/>
            <person name="Celniker S.E."/>
            <person name="de Grey A.D.N.J."/>
            <person name="Drysdale R.A."/>
            <person name="Harris N.L."/>
            <person name="Richter J."/>
            <person name="Russo S."/>
            <person name="Schroeder A.J."/>
            <person name="Shu S.Q."/>
            <person name="Stapleton M."/>
            <person name="Yamada C."/>
            <person name="Ashburner M."/>
            <person name="Gelbart W.M."/>
            <person name="Rubin G.M."/>
            <person name="Lewis S.E."/>
        </authorList>
    </citation>
    <scope>GENOME REANNOTATION</scope>
    <source>
        <strain evidence="13">Berkeley</strain>
    </source>
</reference>
<reference evidence="10" key="3">
    <citation type="journal article" date="2002" name="Genome Biol.">
        <title>A Drosophila full-length cDNA resource.</title>
        <authorList>
            <person name="Stapleton M."/>
            <person name="Carlson J.W."/>
            <person name="Brokstein P."/>
            <person name="Yu C."/>
            <person name="Champe M."/>
            <person name="George R.A."/>
            <person name="Guarin H."/>
            <person name="Kronmiller B."/>
            <person name="Pacleb J.M."/>
            <person name="Park S."/>
            <person name="Wan K.H."/>
            <person name="Rubin G.M."/>
            <person name="Celniker S.E."/>
        </authorList>
    </citation>
    <scope>NUCLEOTIDE SEQUENCE [LARGE SCALE MRNA] OF 818-1336</scope>
    <source>
        <strain evidence="10">Berkeley</strain>
        <tissue evidence="10">Embryo</tissue>
    </source>
</reference>
<reference evidence="11" key="4">
    <citation type="submission" date="2010-06" db="EMBL/GenBank/DDBJ databases">
        <authorList>
            <person name="Carlson J."/>
            <person name="Booth B."/>
            <person name="Frise E."/>
            <person name="Park S."/>
            <person name="Wan K."/>
            <person name="Yu C."/>
            <person name="Celniker S."/>
        </authorList>
    </citation>
    <scope>NUCLEOTIDE SEQUENCE [LARGE SCALE MRNA] OF 407-817</scope>
    <source>
        <strain evidence="11">Berkeley</strain>
    </source>
</reference>
<reference evidence="7" key="5">
    <citation type="journal article" date="2016" name="J. Cell Biol.">
        <title>Transition zone assembly and its contribution to axoneme formation in Drosophila male germ cells.</title>
        <authorList>
            <person name="Vieillard J."/>
            <person name="Paschaki M."/>
            <person name="Duteyrat J.L."/>
            <person name="Augiere C."/>
            <person name="Cortier E."/>
            <person name="Lapart J.A."/>
            <person name="Thomas J."/>
            <person name="Durand B."/>
        </authorList>
    </citation>
    <scope>FUNCTION</scope>
    <scope>IDENTIFICATION IN THE MKS COMPLEX</scope>
    <scope>SUBCELLULAR LOCATION</scope>
    <scope>TISSUE SPECIFICITY</scope>
</reference>
<reference evidence="7" key="6">
    <citation type="journal article" date="2016" name="J. Cell Sci.">
        <title>Drosophila sensory cilia lacking MKS proteins exhibit striking defects in development but only subtle defects in adults.</title>
        <authorList>
            <person name="Pratt M.B."/>
            <person name="Titlow J.S."/>
            <person name="Davis I."/>
            <person name="Barker A.R."/>
            <person name="Dawe H.R."/>
            <person name="Raff J.W."/>
            <person name="Roque H."/>
        </authorList>
    </citation>
    <scope>FUNCTION</scope>
    <scope>IDENTIFICATION IN THE MKS COMPLEX</scope>
    <scope>SUBCELLULAR LOCATION</scope>
    <scope>TISSUE SPECIFICITY</scope>
</reference>
<gene>
    <name evidence="12" type="primary">Cc2d2a</name>
    <name evidence="12" type="ORF">CG43370</name>
</gene>
<dbReference type="EMBL" id="AE013599">
    <property type="protein sequence ID" value="AAF57841.2"/>
    <property type="molecule type" value="Genomic_DNA"/>
</dbReference>
<dbReference type="EMBL" id="AY119216">
    <property type="protein sequence ID" value="AAM51076.1"/>
    <property type="molecule type" value="mRNA"/>
</dbReference>
<dbReference type="EMBL" id="BT125014">
    <property type="protein sequence ID" value="ADI46810.1"/>
    <property type="molecule type" value="mRNA"/>
</dbReference>
<dbReference type="RefSeq" id="NP_611229.2">
    <property type="nucleotide sequence ID" value="NM_137385.2"/>
</dbReference>
<dbReference type="SMR" id="A1ZAV1"/>
<dbReference type="ComplexPortal" id="CPX-2339">
    <property type="entry name" value="MKS complex"/>
</dbReference>
<dbReference type="FunCoup" id="A1ZAV1">
    <property type="interactions" value="42"/>
</dbReference>
<dbReference type="STRING" id="7227.FBpp0298338"/>
<dbReference type="PaxDb" id="7227-FBpp0298338"/>
<dbReference type="EnsemblMetazoa" id="FBtr0307337">
    <property type="protein sequence ID" value="FBpp0298338"/>
    <property type="gene ID" value="FBgn0263113"/>
</dbReference>
<dbReference type="GeneID" id="36982"/>
<dbReference type="KEGG" id="dme:Dmel_CG43370"/>
<dbReference type="UCSC" id="CG18432-RA">
    <property type="organism name" value="d. melanogaster"/>
</dbReference>
<dbReference type="AGR" id="FB:FBgn0263113"/>
<dbReference type="CTD" id="57545"/>
<dbReference type="FlyBase" id="FBgn0263113">
    <property type="gene designation" value="Cc2d2a"/>
</dbReference>
<dbReference type="VEuPathDB" id="VectorBase:FBgn0263113"/>
<dbReference type="eggNOG" id="KOG3639">
    <property type="taxonomic scope" value="Eukaryota"/>
</dbReference>
<dbReference type="GeneTree" id="ENSGT00940000167943"/>
<dbReference type="HOGENOM" id="CLU_001707_0_0_1"/>
<dbReference type="InParanoid" id="A1ZAV1"/>
<dbReference type="OMA" id="IYWPETI"/>
<dbReference type="OrthoDB" id="2162143at2759"/>
<dbReference type="PhylomeDB" id="A1ZAV1"/>
<dbReference type="BioGRID-ORCS" id="36982">
    <property type="hits" value="0 hits in 1 CRISPR screen"/>
</dbReference>
<dbReference type="GenomeRNAi" id="36982"/>
<dbReference type="PRO" id="PR:A1ZAV1"/>
<dbReference type="Proteomes" id="UP000000803">
    <property type="component" value="Chromosome 2R"/>
</dbReference>
<dbReference type="Bgee" id="FBgn0263113">
    <property type="expression patterns" value="Expressed in adult anterior midgut class II enteroendocrine cell in adult midgut (Drosophila) and 4 other cell types or tissues"/>
</dbReference>
<dbReference type="GO" id="GO:0005814">
    <property type="term" value="C:centriole"/>
    <property type="evidence" value="ECO:0007669"/>
    <property type="project" value="UniProtKB-SubCell"/>
</dbReference>
<dbReference type="GO" id="GO:0035869">
    <property type="term" value="C:ciliary transition zone"/>
    <property type="evidence" value="ECO:0000314"/>
    <property type="project" value="FlyBase"/>
</dbReference>
<dbReference type="GO" id="GO:0005737">
    <property type="term" value="C:cytoplasm"/>
    <property type="evidence" value="ECO:0007669"/>
    <property type="project" value="UniProtKB-KW"/>
</dbReference>
<dbReference type="GO" id="GO:0036038">
    <property type="term" value="C:MKS complex"/>
    <property type="evidence" value="ECO:0000250"/>
    <property type="project" value="FlyBase"/>
</dbReference>
<dbReference type="GO" id="GO:0060271">
    <property type="term" value="P:cilium assembly"/>
    <property type="evidence" value="ECO:0000255"/>
    <property type="project" value="FlyBase"/>
</dbReference>
<dbReference type="GO" id="GO:1905515">
    <property type="term" value="P:non-motile cilium assembly"/>
    <property type="evidence" value="ECO:0000318"/>
    <property type="project" value="GO_Central"/>
</dbReference>
<dbReference type="GO" id="GO:1904491">
    <property type="term" value="P:protein localization to ciliary transition zone"/>
    <property type="evidence" value="ECO:0000318"/>
    <property type="project" value="GO_Central"/>
</dbReference>
<dbReference type="CDD" id="cd00030">
    <property type="entry name" value="C2"/>
    <property type="match status" value="1"/>
</dbReference>
<dbReference type="Gene3D" id="2.60.40.150">
    <property type="entry name" value="C2 domain"/>
    <property type="match status" value="1"/>
</dbReference>
<dbReference type="InterPro" id="IPR000008">
    <property type="entry name" value="C2_dom"/>
</dbReference>
<dbReference type="InterPro" id="IPR035892">
    <property type="entry name" value="C2_domain_sf"/>
</dbReference>
<dbReference type="InterPro" id="IPR028928">
    <property type="entry name" value="CC2D2AN-C2"/>
</dbReference>
<dbReference type="InterPro" id="IPR056288">
    <property type="entry name" value="CEP76_C"/>
</dbReference>
<dbReference type="InterPro" id="IPR056290">
    <property type="entry name" value="CEPT76/DRC7_peptidase-like_dom"/>
</dbReference>
<dbReference type="InterPro" id="IPR052434">
    <property type="entry name" value="Tectonic-like_complex_comp"/>
</dbReference>
<dbReference type="PANTHER" id="PTHR20837">
    <property type="entry name" value="CENTROSOMAL PROTEIN-RELATED"/>
    <property type="match status" value="1"/>
</dbReference>
<dbReference type="PANTHER" id="PTHR20837:SF0">
    <property type="entry name" value="COILED-COIL AND C2 DOMAIN-CONTAINING PROTEIN 2A"/>
    <property type="match status" value="1"/>
</dbReference>
<dbReference type="Pfam" id="PF00168">
    <property type="entry name" value="C2"/>
    <property type="match status" value="1"/>
</dbReference>
<dbReference type="Pfam" id="PF15625">
    <property type="entry name" value="CC2D2AN-C2"/>
    <property type="match status" value="1"/>
</dbReference>
<dbReference type="Pfam" id="PF24652">
    <property type="entry name" value="CEP76_C"/>
    <property type="match status" value="1"/>
</dbReference>
<dbReference type="Pfam" id="PF24656">
    <property type="entry name" value="CEPT76_peptidase"/>
    <property type="match status" value="1"/>
</dbReference>
<dbReference type="SMART" id="SM00239">
    <property type="entry name" value="C2"/>
    <property type="match status" value="1"/>
</dbReference>
<dbReference type="SUPFAM" id="SSF49562">
    <property type="entry name" value="C2 domain (Calcium/lipid-binding domain, CaLB)"/>
    <property type="match status" value="1"/>
</dbReference>
<dbReference type="PROSITE" id="PS50004">
    <property type="entry name" value="C2"/>
    <property type="match status" value="1"/>
</dbReference>
<accession>A1ZAV1</accession>
<accession>D6W4W4</accession>
<accession>Q8MRX3</accession>
<organism evidence="13">
    <name type="scientific">Drosophila melanogaster</name>
    <name type="common">Fruit fly</name>
    <dbReference type="NCBI Taxonomy" id="7227"/>
    <lineage>
        <taxon>Eukaryota</taxon>
        <taxon>Metazoa</taxon>
        <taxon>Ecdysozoa</taxon>
        <taxon>Arthropoda</taxon>
        <taxon>Hexapoda</taxon>
        <taxon>Insecta</taxon>
        <taxon>Pterygota</taxon>
        <taxon>Neoptera</taxon>
        <taxon>Endopterygota</taxon>
        <taxon>Diptera</taxon>
        <taxon>Brachycera</taxon>
        <taxon>Muscomorpha</taxon>
        <taxon>Ephydroidea</taxon>
        <taxon>Drosophilidae</taxon>
        <taxon>Drosophila</taxon>
        <taxon>Sophophora</taxon>
    </lineage>
</organism>
<comment type="function">
    <text evidence="1 8 9">Probable component of the tectonic-like complex (also named MKS complex), a complex localized at the transition zone of primary cilia (Probable). Required for ciliary structure and function (By similarity).</text>
</comment>
<comment type="subunit">
    <text evidence="8 9">Probable component of the tectonic-like complex (also named MKS complex), composed of B9d1, B9d2, Cc2d2a, Mks1 and tctn.</text>
</comment>
<comment type="subcellular location">
    <subcellularLocation>
        <location evidence="5 6">Cytoplasm</location>
        <location evidence="5 6">Cytoskeleton</location>
        <location evidence="5 6">Cilium basal body</location>
    </subcellularLocation>
    <subcellularLocation>
        <location evidence="6">Cytoplasm</location>
        <location evidence="6">Cytoskeleton</location>
        <location evidence="6">Microtubule organizing center</location>
        <location evidence="6">Centrosome</location>
        <location evidence="6">Centriole</location>
    </subcellularLocation>
    <text evidence="5 6">Localizes at the transition zone (TZ), a region between the basal body and the ciliary axoneme (PubMed:27577095, PubMed:27646273). Co-localizes with the tectonic-like complex (PubMed:27646273).</text>
</comment>
<comment type="tissue specificity">
    <text evidence="5 6">Expressed in the antennae of chordotonal neurons and male germ cells (at protein level).</text>
</comment>
<proteinExistence type="evidence at protein level"/>
<protein>
    <recommendedName>
        <fullName evidence="12">Coiled-coil and C2 domain-containing protein 2A</fullName>
    </recommendedName>
</protein>